<proteinExistence type="evidence at protein level"/>
<keyword id="KW-0472">Membrane</keyword>
<keyword id="KW-0496">Mitochondrion</keyword>
<keyword id="KW-0999">Mitochondrion inner membrane</keyword>
<keyword id="KW-1185">Reference proteome</keyword>
<keyword id="KW-1278">Translocase</keyword>
<keyword id="KW-0812">Transmembrane</keyword>
<keyword id="KW-1133">Transmembrane helix</keyword>
<accession>P00422</accession>
<accession>M1R9R0</accession>
<protein>
    <recommendedName>
        <fullName>Cytochrome c oxidase subunit 3</fullName>
        <ecNumber>7.1.1.9</ecNumber>
    </recommendedName>
    <alternativeName>
        <fullName>Cytochrome c oxidase polypeptide III</fullName>
    </alternativeName>
    <alternativeName>
        <fullName evidence="4">Cytochrome c oxidase subunit Cox3</fullName>
    </alternativeName>
</protein>
<gene>
    <name type="primary">cox-3</name>
    <name type="synonym">cox3</name>
    <name type="synonym">oxi2</name>
    <name type="ORF">NCM012</name>
    <name type="ORF">NCU16003</name>
</gene>
<sequence length="269" mass="30089">MTNLIRSNFQDHPFHLVSPSPWPLNTSVCLLNLTTTGALSMHNFNNIHYLYYIALIGLVSAMFLWFRDIISEGTFLGDHTLAVQRGLNLGIILFIVSEALFFLAIFWAFFHSALTPTVELGAQWPPIGIEPVNPFELPLLNTVILLSSGATITYAHHALIKGEREGALYGSIATILLAIIFTGFQGVEYSVSSFTISDGAFGTCFFFSTGFHGIHVIIGTIFLAVALWRIFAYHLTDNHHVGFEGGILYWHFVDVVWLFLYISVYYWGS</sequence>
<feature type="chain" id="PRO_0000183813" description="Cytochrome c oxidase subunit 3">
    <location>
        <begin position="1"/>
        <end position="269"/>
    </location>
</feature>
<feature type="topological domain" description="Mitochondrial matrix" evidence="5">
    <location>
        <begin position="1"/>
        <end position="22"/>
    </location>
</feature>
<feature type="transmembrane region" description="Helical; Name=1" evidence="1">
    <location>
        <begin position="23"/>
        <end position="41"/>
    </location>
</feature>
<feature type="topological domain" description="Mitochondrial intermembrane" evidence="5">
    <location>
        <begin position="42"/>
        <end position="48"/>
    </location>
</feature>
<feature type="transmembrane region" description="Helical; Name=2" evidence="1">
    <location>
        <begin position="49"/>
        <end position="73"/>
    </location>
</feature>
<feature type="topological domain" description="Mitochondrial matrix" evidence="5">
    <location>
        <begin position="74"/>
        <end position="80"/>
    </location>
</feature>
<feature type="transmembrane region" description="Helical; Name=3" evidence="1">
    <location>
        <begin position="81"/>
        <end position="114"/>
    </location>
</feature>
<feature type="topological domain" description="Mitochondrial intermembrane" evidence="5">
    <location>
        <begin position="115"/>
        <end position="137"/>
    </location>
</feature>
<feature type="transmembrane region" description="Helical; Name=4" evidence="1">
    <location>
        <begin position="138"/>
        <end position="161"/>
    </location>
</feature>
<feature type="topological domain" description="Mitochondrial matrix" evidence="5">
    <location>
        <begin position="162"/>
        <end position="164"/>
    </location>
</feature>
<feature type="transmembrane region" description="Helical; Name=5" evidence="1">
    <location>
        <begin position="165"/>
        <end position="188"/>
    </location>
</feature>
<feature type="topological domain" description="Mitochondrial intermembrane" evidence="5">
    <location>
        <begin position="189"/>
        <end position="201"/>
    </location>
</feature>
<feature type="transmembrane region" description="Helical; Name=6" evidence="1">
    <location>
        <begin position="202"/>
        <end position="230"/>
    </location>
</feature>
<feature type="topological domain" description="Mitochondrial matrix" evidence="5">
    <location>
        <begin position="231"/>
        <end position="248"/>
    </location>
</feature>
<feature type="transmembrane region" description="Helical; Name=7" evidence="1">
    <location>
        <begin position="249"/>
        <end position="265"/>
    </location>
</feature>
<feature type="topological domain" description="Mitochondrial intermembrane" evidence="5">
    <location>
        <begin position="266"/>
        <end position="269"/>
    </location>
</feature>
<comment type="function">
    <text evidence="1">Component of the cytochrome c oxidase, the last enzyme in the mitochondrial electron transport chain which drives oxidative phosphorylation. The respiratory chain contains 3 multisubunit complexes succinate dehydrogenase (complex II, CII), ubiquinol-cytochrome c oxidoreductase (cytochrome b-c1 complex, complex III, CIII) and cytochrome c oxidase (complex IV, CIV), that cooperate to transfer electrons derived from NADH and succinate to molecular oxygen, creating an electrochemical gradient over the inner membrane that drives transmembrane transport and the ATP synthase. Cytochrome c oxidase is the component of the respiratory chain that catalyzes the reduction of oxygen to water. Electrons originating from reduced cytochrome c in the intermembrane space (IMS) are transferred via the dinuclear copper A center (CU(A)) of Cox2 and heme A of Cox1 to the active site in Cox1, a binuclear center (BNC) formed by heme A3 and copper B (CU(B)). The BNC reduces molecular oxygen to 2 water molecules using 4 electrons from cytochrome c in the IMS and 4 protons from the mitochondrial matrix.</text>
</comment>
<comment type="catalytic activity">
    <reaction evidence="1">
        <text>4 Fe(II)-[cytochrome c] + O2 + 8 H(+)(in) = 4 Fe(III)-[cytochrome c] + 2 H2O + 4 H(+)(out)</text>
        <dbReference type="Rhea" id="RHEA:11436"/>
        <dbReference type="Rhea" id="RHEA-COMP:10350"/>
        <dbReference type="Rhea" id="RHEA-COMP:14399"/>
        <dbReference type="ChEBI" id="CHEBI:15377"/>
        <dbReference type="ChEBI" id="CHEBI:15378"/>
        <dbReference type="ChEBI" id="CHEBI:15379"/>
        <dbReference type="ChEBI" id="CHEBI:29033"/>
        <dbReference type="ChEBI" id="CHEBI:29034"/>
        <dbReference type="EC" id="7.1.1.9"/>
    </reaction>
    <physiologicalReaction direction="left-to-right" evidence="1">
        <dbReference type="Rhea" id="RHEA:11437"/>
    </physiologicalReaction>
</comment>
<comment type="subunit">
    <text evidence="2 3">Component of the cytochrome c oxidase (complex IV, CIV), a multisubunit enzyme composed of 11 subunits. The complex is composed of a catalytic core of 3 subunits Cox1, Cox2 and Cox3, encoded in the mitochondrial DNA, and 8 supernumerary subunits Cox4, Cox5a/Cox5, Cox6, Cox7, Cox8, Cox7a/Cox9, Cox6b/Cox12 and Cox6a/Cox13, which are encoded in the nuclear genome (PubMed:31316820). The complex exists as a monomer or a dimer and forms respiratory supercomplexes (SCs) in the inner mitochondrial membrane with NADH-ubiquinone oxidoreductase (complex I, CI) and ubiquinol-cytochrome c oxidoreductase (cytochrome b-c1 complex, complex III, CIII), resulting in various different assemblies (supercomplexes I(1)IV(1), I(1)III(3)IV(2), III(2)IV(1) and III(2)IV(2) as well as larger supercomplexes of compositions like I(1)III(2)IV(5-6)) (PubMed:17873079).</text>
</comment>
<comment type="subcellular location">
    <subcellularLocation>
        <location evidence="3">Mitochondrion inner membrane</location>
        <topology evidence="3">Multi-pass membrane protein</topology>
    </subcellularLocation>
</comment>
<comment type="similarity">
    <text evidence="5">Belongs to the cytochrome c oxidase subunit 3 family.</text>
</comment>
<reference key="1">
    <citation type="journal article" date="1982" name="J. Biol. Chem.">
        <title>Cytochrome oxidase subunit III gene in Neurospora crassa mitochondria. Location and sequence.</title>
        <authorList>
            <person name="Browning K.S."/>
            <person name="RajBhandary U.L."/>
        </authorList>
    </citation>
    <scope>NUCLEOTIDE SEQUENCE [GENOMIC DNA]</scope>
</reference>
<reference key="2">
    <citation type="journal article" date="2003" name="Nature">
        <title>The genome sequence of the filamentous fungus Neurospora crassa.</title>
        <authorList>
            <person name="Galagan J.E."/>
            <person name="Calvo S.E."/>
            <person name="Borkovich K.A."/>
            <person name="Selker E.U."/>
            <person name="Read N.D."/>
            <person name="Jaffe D.B."/>
            <person name="FitzHugh W."/>
            <person name="Ma L.-J."/>
            <person name="Smirnov S."/>
            <person name="Purcell S."/>
            <person name="Rehman B."/>
            <person name="Elkins T."/>
            <person name="Engels R."/>
            <person name="Wang S."/>
            <person name="Nielsen C.B."/>
            <person name="Butler J."/>
            <person name="Endrizzi M."/>
            <person name="Qui D."/>
            <person name="Ianakiev P."/>
            <person name="Bell-Pedersen D."/>
            <person name="Nelson M.A."/>
            <person name="Werner-Washburne M."/>
            <person name="Selitrennikoff C.P."/>
            <person name="Kinsey J.A."/>
            <person name="Braun E.L."/>
            <person name="Zelter A."/>
            <person name="Schulte U."/>
            <person name="Kothe G.O."/>
            <person name="Jedd G."/>
            <person name="Mewes H.-W."/>
            <person name="Staben C."/>
            <person name="Marcotte E."/>
            <person name="Greenberg D."/>
            <person name="Roy A."/>
            <person name="Foley K."/>
            <person name="Naylor J."/>
            <person name="Stange-Thomann N."/>
            <person name="Barrett R."/>
            <person name="Gnerre S."/>
            <person name="Kamal M."/>
            <person name="Kamvysselis M."/>
            <person name="Mauceli E.W."/>
            <person name="Bielke C."/>
            <person name="Rudd S."/>
            <person name="Frishman D."/>
            <person name="Krystofova S."/>
            <person name="Rasmussen C."/>
            <person name="Metzenberg R.L."/>
            <person name="Perkins D.D."/>
            <person name="Kroken S."/>
            <person name="Cogoni C."/>
            <person name="Macino G."/>
            <person name="Catcheside D.E.A."/>
            <person name="Li W."/>
            <person name="Pratt R.J."/>
            <person name="Osmani S.A."/>
            <person name="DeSouza C.P.C."/>
            <person name="Glass N.L."/>
            <person name="Orbach M.J."/>
            <person name="Berglund J.A."/>
            <person name="Voelker R."/>
            <person name="Yarden O."/>
            <person name="Plamann M."/>
            <person name="Seiler S."/>
            <person name="Dunlap J.C."/>
            <person name="Radford A."/>
            <person name="Aramayo R."/>
            <person name="Natvig D.O."/>
            <person name="Alex L.A."/>
            <person name="Mannhaupt G."/>
            <person name="Ebbole D.J."/>
            <person name="Freitag M."/>
            <person name="Paulsen I."/>
            <person name="Sachs M.S."/>
            <person name="Lander E.S."/>
            <person name="Nusbaum C."/>
            <person name="Birren B.W."/>
        </authorList>
    </citation>
    <scope>NUCLEOTIDE SEQUENCE [LARGE SCALE GENOMIC DNA]</scope>
    <source>
        <strain>ATCC 24698 / 74-OR23-1A / CBS 708.71 / DSM 1257 / FGSC 987</strain>
    </source>
</reference>
<reference key="3">
    <citation type="book" date="2004" name="The Mycota II, Genetics and Biotechnology (2nd edition)">
        <title>Mitochondrial genetics of Neurospora.</title>
        <editorList>
            <person name="Kueck U."/>
        </editorList>
        <authorList>
            <person name="Kennell J.C."/>
            <person name="Collins R.A."/>
            <person name="Griffiths A.J.F."/>
            <person name="Nargang F.E."/>
        </authorList>
    </citation>
    <scope>GENOME REANNOTATION</scope>
    <source>
        <strain>ATCC 24698 / 74-OR23-1A / CBS 708.71 / DSM 1257 / FGSC 987</strain>
    </source>
</reference>
<reference key="4">
    <citation type="journal article" date="1973" name="Eur. J. Biochem.">
        <title>Products of mitochondrial protein synthesis in Neurospora crassa. Determination of equimolar amounts of three products in cytochrome oxidase on the basis of amino-acid analysis.</title>
        <authorList>
            <person name="Sebald W."/>
            <person name="Machleidt W."/>
            <person name="Otto J."/>
        </authorList>
    </citation>
    <scope>AMINO-ACID COMPOSITION</scope>
</reference>
<reference key="5">
    <citation type="journal article" date="2007" name="Eukaryot. Cell">
        <title>Supramolecular organization of the respiratory chain in Neurospora crassa mitochondria.</title>
        <authorList>
            <person name="Marques I."/>
            <person name="Dencher N.A."/>
            <person name="Videira A."/>
            <person name="Krause F."/>
        </authorList>
    </citation>
    <scope>SUBUNIT</scope>
</reference>
<reference key="6">
    <citation type="journal article" date="2019" name="IUCrJ">
        <title>Cryo-EM structure of Neurospora crassa respiratory complex IV.</title>
        <authorList>
            <person name="Bausewein T."/>
            <person name="Nussberger S."/>
            <person name="Kuehlbrandt W."/>
        </authorList>
    </citation>
    <scope>STRUCTURE BY ELECTRON MICROSCOPY (5.5 ANGSTROMS)</scope>
    <scope>SUBUNIT</scope>
</reference>
<dbReference type="EC" id="7.1.1.9"/>
<dbReference type="EMBL" id="V00668">
    <property type="protein sequence ID" value="CAA24041.1"/>
    <property type="molecule type" value="Genomic_DNA"/>
</dbReference>
<dbReference type="EMBL" id="KC683708">
    <property type="protein sequence ID" value="AGG15992.1"/>
    <property type="molecule type" value="Genomic_DNA"/>
</dbReference>
<dbReference type="PIR" id="A00489">
    <property type="entry name" value="OTNC3"/>
</dbReference>
<dbReference type="RefSeq" id="YP_009126704.1">
    <property type="nucleotide sequence ID" value="NC_026614.1"/>
</dbReference>
<dbReference type="SMR" id="P00422"/>
<dbReference type="FunCoup" id="P00422">
    <property type="interactions" value="215"/>
</dbReference>
<dbReference type="STRING" id="367110.P00422"/>
<dbReference type="EnsemblFungi" id="AGG15992">
    <property type="protein sequence ID" value="AGG15992"/>
    <property type="gene ID" value="NCU16003"/>
</dbReference>
<dbReference type="GeneID" id="23681534"/>
<dbReference type="KEGG" id="ncr:NCU16003"/>
<dbReference type="VEuPathDB" id="FungiDB:NCU16003"/>
<dbReference type="InParanoid" id="P00422"/>
<dbReference type="OrthoDB" id="10050457at2759"/>
<dbReference type="Proteomes" id="UP000001805">
    <property type="component" value="Mitochondrion"/>
</dbReference>
<dbReference type="GO" id="GO:0005743">
    <property type="term" value="C:mitochondrial inner membrane"/>
    <property type="evidence" value="ECO:0007669"/>
    <property type="project" value="UniProtKB-SubCell"/>
</dbReference>
<dbReference type="GO" id="GO:0005739">
    <property type="term" value="C:mitochondrion"/>
    <property type="evidence" value="ECO:0000318"/>
    <property type="project" value="GO_Central"/>
</dbReference>
<dbReference type="GO" id="GO:0045277">
    <property type="term" value="C:respiratory chain complex IV"/>
    <property type="evidence" value="ECO:0007669"/>
    <property type="project" value="EnsemblFungi"/>
</dbReference>
<dbReference type="GO" id="GO:0004129">
    <property type="term" value="F:cytochrome-c oxidase activity"/>
    <property type="evidence" value="ECO:0007669"/>
    <property type="project" value="UniProtKB-EC"/>
</dbReference>
<dbReference type="GO" id="GO:0048039">
    <property type="term" value="F:ubiquinone binding"/>
    <property type="evidence" value="ECO:0007669"/>
    <property type="project" value="EnsemblFungi"/>
</dbReference>
<dbReference type="GO" id="GO:0006123">
    <property type="term" value="P:mitochondrial electron transport, cytochrome c to oxygen"/>
    <property type="evidence" value="ECO:0000318"/>
    <property type="project" value="GO_Central"/>
</dbReference>
<dbReference type="CDD" id="cd01665">
    <property type="entry name" value="Cyt_c_Oxidase_III"/>
    <property type="match status" value="1"/>
</dbReference>
<dbReference type="FunFam" id="1.10.287.70:FF:000082">
    <property type="entry name" value="Cytochrome c oxidase subunit 3"/>
    <property type="match status" value="1"/>
</dbReference>
<dbReference type="FunFam" id="1.20.120.80:FF:000002">
    <property type="entry name" value="Cytochrome c oxidase subunit 3"/>
    <property type="match status" value="1"/>
</dbReference>
<dbReference type="Gene3D" id="1.10.287.70">
    <property type="match status" value="1"/>
</dbReference>
<dbReference type="Gene3D" id="1.20.120.80">
    <property type="entry name" value="Cytochrome c oxidase, subunit III, four-helix bundle"/>
    <property type="match status" value="1"/>
</dbReference>
<dbReference type="InterPro" id="IPR024791">
    <property type="entry name" value="Cyt_c/ubiquinol_Oxase_su3"/>
</dbReference>
<dbReference type="InterPro" id="IPR033945">
    <property type="entry name" value="Cyt_c_oxase_su3_dom"/>
</dbReference>
<dbReference type="InterPro" id="IPR000298">
    <property type="entry name" value="Cyt_c_oxidase-like_su3"/>
</dbReference>
<dbReference type="InterPro" id="IPR035973">
    <property type="entry name" value="Cyt_c_oxidase_su3-like_sf"/>
</dbReference>
<dbReference type="InterPro" id="IPR013833">
    <property type="entry name" value="Cyt_c_oxidase_su3_a-hlx"/>
</dbReference>
<dbReference type="PANTHER" id="PTHR11403:SF7">
    <property type="entry name" value="CYTOCHROME C OXIDASE SUBUNIT 3"/>
    <property type="match status" value="1"/>
</dbReference>
<dbReference type="PANTHER" id="PTHR11403">
    <property type="entry name" value="CYTOCHROME C OXIDASE SUBUNIT III"/>
    <property type="match status" value="1"/>
</dbReference>
<dbReference type="Pfam" id="PF00510">
    <property type="entry name" value="COX3"/>
    <property type="match status" value="1"/>
</dbReference>
<dbReference type="SUPFAM" id="SSF81452">
    <property type="entry name" value="Cytochrome c oxidase subunit III-like"/>
    <property type="match status" value="1"/>
</dbReference>
<dbReference type="PROSITE" id="PS50253">
    <property type="entry name" value="COX3"/>
    <property type="match status" value="1"/>
</dbReference>
<name>COX3_NEUCR</name>
<geneLocation type="mitochondrion"/>
<evidence type="ECO:0000250" key="1">
    <source>
        <dbReference type="UniProtKB" id="P00420"/>
    </source>
</evidence>
<evidence type="ECO:0000269" key="2">
    <source>
    </source>
</evidence>
<evidence type="ECO:0000269" key="3">
    <source>
    </source>
</evidence>
<evidence type="ECO:0000303" key="4">
    <source>
    </source>
</evidence>
<evidence type="ECO:0000305" key="5"/>
<organism>
    <name type="scientific">Neurospora crassa (strain ATCC 24698 / 74-OR23-1A / CBS 708.71 / DSM 1257 / FGSC 987)</name>
    <dbReference type="NCBI Taxonomy" id="367110"/>
    <lineage>
        <taxon>Eukaryota</taxon>
        <taxon>Fungi</taxon>
        <taxon>Dikarya</taxon>
        <taxon>Ascomycota</taxon>
        <taxon>Pezizomycotina</taxon>
        <taxon>Sordariomycetes</taxon>
        <taxon>Sordariomycetidae</taxon>
        <taxon>Sordariales</taxon>
        <taxon>Sordariaceae</taxon>
        <taxon>Neurospora</taxon>
    </lineage>
</organism>